<comment type="function">
    <text evidence="1">Quinone reductase that provides resistance to thiol-specific stress caused by electrophilic quinones.</text>
</comment>
<comment type="function">
    <text evidence="1">Also exhibits azoreductase activity. Catalyzes the reductive cleavage of the azo bond in aromatic azo compounds to the corresponding amines.</text>
</comment>
<comment type="catalytic activity">
    <reaction evidence="1">
        <text>2 a quinone + NADH + H(+) = 2 a 1,4-benzosemiquinone + NAD(+)</text>
        <dbReference type="Rhea" id="RHEA:65952"/>
        <dbReference type="ChEBI" id="CHEBI:15378"/>
        <dbReference type="ChEBI" id="CHEBI:57540"/>
        <dbReference type="ChEBI" id="CHEBI:57945"/>
        <dbReference type="ChEBI" id="CHEBI:132124"/>
        <dbReference type="ChEBI" id="CHEBI:134225"/>
    </reaction>
</comment>
<comment type="catalytic activity">
    <reaction evidence="1">
        <text>N,N-dimethyl-1,4-phenylenediamine + anthranilate + 2 NAD(+) = 2-(4-dimethylaminophenyl)diazenylbenzoate + 2 NADH + 2 H(+)</text>
        <dbReference type="Rhea" id="RHEA:55872"/>
        <dbReference type="ChEBI" id="CHEBI:15378"/>
        <dbReference type="ChEBI" id="CHEBI:15783"/>
        <dbReference type="ChEBI" id="CHEBI:16567"/>
        <dbReference type="ChEBI" id="CHEBI:57540"/>
        <dbReference type="ChEBI" id="CHEBI:57945"/>
        <dbReference type="ChEBI" id="CHEBI:71579"/>
        <dbReference type="EC" id="1.7.1.17"/>
    </reaction>
</comment>
<comment type="cofactor">
    <cofactor evidence="1">
        <name>FMN</name>
        <dbReference type="ChEBI" id="CHEBI:58210"/>
    </cofactor>
    <text evidence="1">Binds 1 FMN per subunit.</text>
</comment>
<comment type="subunit">
    <text evidence="1">Homodimer.</text>
</comment>
<comment type="similarity">
    <text evidence="1">Belongs to the azoreductase type 1 family.</text>
</comment>
<sequence length="207" mass="23123">MKLLHLDSSPRGERSISRSLTQQFVSLWKQMHLDVPVIYRDLGRYPVPAIDEAWIAAAFCPPAQLTPELQSALMISDELIAELLAANLYIFGIPMYNYSVPASFKAYIDQIVRVRRTFVVSADGYEGLLKDKKVLVITTRGGSYAGEPLDFQEPYLRAVFGFIGITDVTFIHAENLAIGSEERQLAIATAHEAIQQVVKTWQSSTCI</sequence>
<accession>Q3M1N6</accession>
<name>AZOR1_TRIV2</name>
<organism>
    <name type="scientific">Trichormus variabilis (strain ATCC 29413 / PCC 7937)</name>
    <name type="common">Anabaena variabilis</name>
    <dbReference type="NCBI Taxonomy" id="240292"/>
    <lineage>
        <taxon>Bacteria</taxon>
        <taxon>Bacillati</taxon>
        <taxon>Cyanobacteriota</taxon>
        <taxon>Cyanophyceae</taxon>
        <taxon>Nostocales</taxon>
        <taxon>Nostocaceae</taxon>
        <taxon>Trichormus</taxon>
    </lineage>
</organism>
<geneLocation type="plasmid">
    <name>pAnaC</name>
</geneLocation>
<reference key="1">
    <citation type="journal article" date="2014" name="Stand. Genomic Sci.">
        <title>Complete genome sequence of Anabaena variabilis ATCC 29413.</title>
        <authorList>
            <person name="Thiel T."/>
            <person name="Pratte B.S."/>
            <person name="Zhong J."/>
            <person name="Goodwin L."/>
            <person name="Copeland A."/>
            <person name="Lucas S."/>
            <person name="Han C."/>
            <person name="Pitluck S."/>
            <person name="Land M.L."/>
            <person name="Kyrpides N.C."/>
            <person name="Woyke T."/>
        </authorList>
    </citation>
    <scope>NUCLEOTIDE SEQUENCE [LARGE SCALE GENOMIC DNA]</scope>
    <source>
        <strain>ATCC 29413 / PCC 7937</strain>
    </source>
</reference>
<evidence type="ECO:0000255" key="1">
    <source>
        <dbReference type="HAMAP-Rule" id="MF_01216"/>
    </source>
</evidence>
<feature type="chain" id="PRO_0000245870" description="FMN-dependent NADH:quinone oxidoreductase 1">
    <location>
        <begin position="1"/>
        <end position="207"/>
    </location>
</feature>
<feature type="binding site" evidence="1">
    <location>
        <position position="9"/>
    </location>
    <ligand>
        <name>FMN</name>
        <dbReference type="ChEBI" id="CHEBI:58210"/>
    </ligand>
</feature>
<feature type="binding site" evidence="1">
    <location>
        <begin position="15"/>
        <end position="17"/>
    </location>
    <ligand>
        <name>FMN</name>
        <dbReference type="ChEBI" id="CHEBI:58210"/>
    </ligand>
</feature>
<feature type="binding site" evidence="1">
    <location>
        <begin position="139"/>
        <end position="142"/>
    </location>
    <ligand>
        <name>FMN</name>
        <dbReference type="ChEBI" id="CHEBI:58210"/>
    </ligand>
</feature>
<proteinExistence type="inferred from homology"/>
<dbReference type="EC" id="1.6.5.-" evidence="1"/>
<dbReference type="EC" id="1.7.1.17" evidence="1"/>
<dbReference type="EMBL" id="CP000121">
    <property type="protein sequence ID" value="ABA25114.1"/>
    <property type="molecule type" value="Genomic_DNA"/>
</dbReference>
<dbReference type="SMR" id="Q3M1N6"/>
<dbReference type="KEGG" id="ava:Ava_C0025"/>
<dbReference type="eggNOG" id="COG1182">
    <property type="taxonomic scope" value="Bacteria"/>
</dbReference>
<dbReference type="HOGENOM" id="CLU_088964_0_0_3"/>
<dbReference type="Proteomes" id="UP000002533">
    <property type="component" value="Plasmid pAnaC"/>
</dbReference>
<dbReference type="GO" id="GO:0009055">
    <property type="term" value="F:electron transfer activity"/>
    <property type="evidence" value="ECO:0007669"/>
    <property type="project" value="UniProtKB-UniRule"/>
</dbReference>
<dbReference type="GO" id="GO:0010181">
    <property type="term" value="F:FMN binding"/>
    <property type="evidence" value="ECO:0007669"/>
    <property type="project" value="UniProtKB-UniRule"/>
</dbReference>
<dbReference type="GO" id="GO:0016652">
    <property type="term" value="F:oxidoreductase activity, acting on NAD(P)H as acceptor"/>
    <property type="evidence" value="ECO:0007669"/>
    <property type="project" value="UniProtKB-UniRule"/>
</dbReference>
<dbReference type="GO" id="GO:0016655">
    <property type="term" value="F:oxidoreductase activity, acting on NAD(P)H, quinone or similar compound as acceptor"/>
    <property type="evidence" value="ECO:0007669"/>
    <property type="project" value="InterPro"/>
</dbReference>
<dbReference type="Gene3D" id="3.40.50.360">
    <property type="match status" value="1"/>
</dbReference>
<dbReference type="HAMAP" id="MF_01216">
    <property type="entry name" value="Azoreductase_type1"/>
    <property type="match status" value="1"/>
</dbReference>
<dbReference type="InterPro" id="IPR003680">
    <property type="entry name" value="Flavodoxin_fold"/>
</dbReference>
<dbReference type="InterPro" id="IPR029039">
    <property type="entry name" value="Flavoprotein-like_sf"/>
</dbReference>
<dbReference type="InterPro" id="IPR050104">
    <property type="entry name" value="FMN-dep_NADH:Q_OxRdtase_AzoR1"/>
</dbReference>
<dbReference type="InterPro" id="IPR023048">
    <property type="entry name" value="NADH:quinone_OxRdtase_FMN_depd"/>
</dbReference>
<dbReference type="PANTHER" id="PTHR43741">
    <property type="entry name" value="FMN-DEPENDENT NADH-AZOREDUCTASE 1"/>
    <property type="match status" value="1"/>
</dbReference>
<dbReference type="PANTHER" id="PTHR43741:SF4">
    <property type="entry name" value="FMN-DEPENDENT NADH:QUINONE OXIDOREDUCTASE"/>
    <property type="match status" value="1"/>
</dbReference>
<dbReference type="Pfam" id="PF02525">
    <property type="entry name" value="Flavodoxin_2"/>
    <property type="match status" value="1"/>
</dbReference>
<dbReference type="SUPFAM" id="SSF52218">
    <property type="entry name" value="Flavoproteins"/>
    <property type="match status" value="1"/>
</dbReference>
<protein>
    <recommendedName>
        <fullName evidence="1">FMN-dependent NADH:quinone oxidoreductase 1</fullName>
        <ecNumber evidence="1">1.6.5.-</ecNumber>
    </recommendedName>
    <alternativeName>
        <fullName evidence="1">Azo-dye reductase 1</fullName>
    </alternativeName>
    <alternativeName>
        <fullName evidence="1">FMN-dependent NADH-azo compound oxidoreductase 1</fullName>
    </alternativeName>
    <alternativeName>
        <fullName evidence="1">FMN-dependent NADH-azoreductase 1</fullName>
        <ecNumber evidence="1">1.7.1.17</ecNumber>
    </alternativeName>
</protein>
<gene>
    <name evidence="1" type="primary">azoR1</name>
    <name type="ordered locus">Ava_C0025</name>
</gene>
<keyword id="KW-0285">Flavoprotein</keyword>
<keyword id="KW-0288">FMN</keyword>
<keyword id="KW-0520">NAD</keyword>
<keyword id="KW-0560">Oxidoreductase</keyword>
<keyword id="KW-0614">Plasmid</keyword>